<reference key="1">
    <citation type="journal article" date="2000" name="Nature">
        <title>Sequence and analysis of chromosome 1 of the plant Arabidopsis thaliana.</title>
        <authorList>
            <person name="Theologis A."/>
            <person name="Ecker J.R."/>
            <person name="Palm C.J."/>
            <person name="Federspiel N.A."/>
            <person name="Kaul S."/>
            <person name="White O."/>
            <person name="Alonso J."/>
            <person name="Altafi H."/>
            <person name="Araujo R."/>
            <person name="Bowman C.L."/>
            <person name="Brooks S.Y."/>
            <person name="Buehler E."/>
            <person name="Chan A."/>
            <person name="Chao Q."/>
            <person name="Chen H."/>
            <person name="Cheuk R.F."/>
            <person name="Chin C.W."/>
            <person name="Chung M.K."/>
            <person name="Conn L."/>
            <person name="Conway A.B."/>
            <person name="Conway A.R."/>
            <person name="Creasy T.H."/>
            <person name="Dewar K."/>
            <person name="Dunn P."/>
            <person name="Etgu P."/>
            <person name="Feldblyum T.V."/>
            <person name="Feng J.-D."/>
            <person name="Fong B."/>
            <person name="Fujii C.Y."/>
            <person name="Gill J.E."/>
            <person name="Goldsmith A.D."/>
            <person name="Haas B."/>
            <person name="Hansen N.F."/>
            <person name="Hughes B."/>
            <person name="Huizar L."/>
            <person name="Hunter J.L."/>
            <person name="Jenkins J."/>
            <person name="Johnson-Hopson C."/>
            <person name="Khan S."/>
            <person name="Khaykin E."/>
            <person name="Kim C.J."/>
            <person name="Koo H.L."/>
            <person name="Kremenetskaia I."/>
            <person name="Kurtz D.B."/>
            <person name="Kwan A."/>
            <person name="Lam B."/>
            <person name="Langin-Hooper S."/>
            <person name="Lee A."/>
            <person name="Lee J.M."/>
            <person name="Lenz C.A."/>
            <person name="Li J.H."/>
            <person name="Li Y.-P."/>
            <person name="Lin X."/>
            <person name="Liu S.X."/>
            <person name="Liu Z.A."/>
            <person name="Luros J.S."/>
            <person name="Maiti R."/>
            <person name="Marziali A."/>
            <person name="Militscher J."/>
            <person name="Miranda M."/>
            <person name="Nguyen M."/>
            <person name="Nierman W.C."/>
            <person name="Osborne B.I."/>
            <person name="Pai G."/>
            <person name="Peterson J."/>
            <person name="Pham P.K."/>
            <person name="Rizzo M."/>
            <person name="Rooney T."/>
            <person name="Rowley D."/>
            <person name="Sakano H."/>
            <person name="Salzberg S.L."/>
            <person name="Schwartz J.R."/>
            <person name="Shinn P."/>
            <person name="Southwick A.M."/>
            <person name="Sun H."/>
            <person name="Tallon L.J."/>
            <person name="Tambunga G."/>
            <person name="Toriumi M.J."/>
            <person name="Town C.D."/>
            <person name="Utterback T."/>
            <person name="Van Aken S."/>
            <person name="Vaysberg M."/>
            <person name="Vysotskaia V.S."/>
            <person name="Walker M."/>
            <person name="Wu D."/>
            <person name="Yu G."/>
            <person name="Fraser C.M."/>
            <person name="Venter J.C."/>
            <person name="Davis R.W."/>
        </authorList>
    </citation>
    <scope>NUCLEOTIDE SEQUENCE [LARGE SCALE GENOMIC DNA]</scope>
    <source>
        <strain>cv. Columbia</strain>
    </source>
</reference>
<reference key="2">
    <citation type="journal article" date="2017" name="Plant J.">
        <title>Araport11: a complete reannotation of the Arabidopsis thaliana reference genome.</title>
        <authorList>
            <person name="Cheng C.Y."/>
            <person name="Krishnakumar V."/>
            <person name="Chan A.P."/>
            <person name="Thibaud-Nissen F."/>
            <person name="Schobel S."/>
            <person name="Town C.D."/>
        </authorList>
    </citation>
    <scope>GENOME REANNOTATION</scope>
    <source>
        <strain>cv. Columbia</strain>
    </source>
</reference>
<name>FBK1_ARATH</name>
<comment type="sequence caution" evidence="2">
    <conflict type="erroneous initiation">
        <sequence resource="EMBL-CDS" id="AAG12576"/>
    </conflict>
    <text>Truncated N-terminus.</text>
</comment>
<feature type="chain" id="PRO_0000283167" description="Putative F-box/kelch-repeat protein At1g12170">
    <location>
        <begin position="1"/>
        <end position="364"/>
    </location>
</feature>
<feature type="domain" description="F-box" evidence="1">
    <location>
        <begin position="1"/>
        <end position="50"/>
    </location>
</feature>
<feature type="repeat" description="Kelch 1">
    <location>
        <begin position="156"/>
        <end position="205"/>
    </location>
</feature>
<feature type="repeat" description="Kelch 2">
    <location>
        <begin position="328"/>
        <end position="364"/>
    </location>
</feature>
<dbReference type="EMBL" id="AC022522">
    <property type="protein sequence ID" value="AAG12576.1"/>
    <property type="status" value="ALT_INIT"/>
    <property type="molecule type" value="Genomic_DNA"/>
</dbReference>
<dbReference type="EMBL" id="CP002684">
    <property type="protein sequence ID" value="AEE28845.1"/>
    <property type="molecule type" value="Genomic_DNA"/>
</dbReference>
<dbReference type="PIR" id="G86256">
    <property type="entry name" value="G86256"/>
</dbReference>
<dbReference type="RefSeq" id="NP_172681.1">
    <property type="nucleotide sequence ID" value="NM_101089.1"/>
</dbReference>
<dbReference type="SMR" id="Q9FWW7"/>
<dbReference type="FunCoup" id="Q9FWW7">
    <property type="interactions" value="2"/>
</dbReference>
<dbReference type="PaxDb" id="3702-AT1G12170.1"/>
<dbReference type="EnsemblPlants" id="AT1G12170.1">
    <property type="protein sequence ID" value="AT1G12170.1"/>
    <property type="gene ID" value="AT1G12170"/>
</dbReference>
<dbReference type="GeneID" id="837770"/>
<dbReference type="Gramene" id="AT1G12170.1">
    <property type="protein sequence ID" value="AT1G12170.1"/>
    <property type="gene ID" value="AT1G12170"/>
</dbReference>
<dbReference type="KEGG" id="ath:AT1G12170"/>
<dbReference type="Araport" id="AT1G12170"/>
<dbReference type="TAIR" id="AT1G12170"/>
<dbReference type="HOGENOM" id="CLU_034692_2_1_1"/>
<dbReference type="InParanoid" id="Q9FWW7"/>
<dbReference type="OMA" id="MCCEDEN"/>
<dbReference type="PRO" id="PR:Q9FWW7"/>
<dbReference type="Proteomes" id="UP000006548">
    <property type="component" value="Chromosome 1"/>
</dbReference>
<dbReference type="ExpressionAtlas" id="Q9FWW7">
    <property type="expression patterns" value="baseline and differential"/>
</dbReference>
<dbReference type="CDD" id="cd22157">
    <property type="entry name" value="F-box_AtFBW1-like"/>
    <property type="match status" value="1"/>
</dbReference>
<dbReference type="Gene3D" id="1.20.1280.50">
    <property type="match status" value="1"/>
</dbReference>
<dbReference type="InterPro" id="IPR006527">
    <property type="entry name" value="F-box-assoc_dom_typ1"/>
</dbReference>
<dbReference type="InterPro" id="IPR017451">
    <property type="entry name" value="F-box-assoc_interact_dom"/>
</dbReference>
<dbReference type="InterPro" id="IPR036047">
    <property type="entry name" value="F-box-like_dom_sf"/>
</dbReference>
<dbReference type="InterPro" id="IPR001810">
    <property type="entry name" value="F-box_dom"/>
</dbReference>
<dbReference type="InterPro" id="IPR050796">
    <property type="entry name" value="SCF_F-box_component"/>
</dbReference>
<dbReference type="NCBIfam" id="TIGR01640">
    <property type="entry name" value="F_box_assoc_1"/>
    <property type="match status" value="1"/>
</dbReference>
<dbReference type="PANTHER" id="PTHR31672">
    <property type="entry name" value="BNACNNG10540D PROTEIN"/>
    <property type="match status" value="1"/>
</dbReference>
<dbReference type="PANTHER" id="PTHR31672:SF13">
    <property type="entry name" value="F-BOX PROTEIN CPR30-LIKE"/>
    <property type="match status" value="1"/>
</dbReference>
<dbReference type="Pfam" id="PF00646">
    <property type="entry name" value="F-box"/>
    <property type="match status" value="1"/>
</dbReference>
<dbReference type="Pfam" id="PF07734">
    <property type="entry name" value="FBA_1"/>
    <property type="match status" value="1"/>
</dbReference>
<dbReference type="SMART" id="SM00256">
    <property type="entry name" value="FBOX"/>
    <property type="match status" value="1"/>
</dbReference>
<dbReference type="SUPFAM" id="SSF81383">
    <property type="entry name" value="F-box domain"/>
    <property type="match status" value="1"/>
</dbReference>
<dbReference type="PROSITE" id="PS50181">
    <property type="entry name" value="FBOX"/>
    <property type="match status" value="1"/>
</dbReference>
<proteinExistence type="predicted"/>
<keyword id="KW-0880">Kelch repeat</keyword>
<keyword id="KW-1185">Reference proteome</keyword>
<keyword id="KW-0677">Repeat</keyword>
<sequence>MMHVILPWELVEEILYRVPPLSLTRFKIVCKQWNTLFKSKSFVNNHLVRVRPQFLLWTDSKMYSVSVNLNDDQKIDMRELPLDIPYLNNFMRTYFTPCDGLLFCDSWSWRKKAAIWNPWLRQTKWIEYSKEKTFTFRGIGYDSGRPDKGHKIIGSSIYNKRKLIEDPLYRSVEIYTFETNGWKSMNTFSEEGEIRPLSDVSLNGNLYWVVSNGETHECFIESFDFSKEIYKCFCTLPWNYNSFHVPVLSTFRKDRLSVLKRKRMAETNNIEIWVTKNKINDDGEPVAWIKFMTVSIAISSNSSPSFFIDNVYQKSFIMCCEDENNKLCVYIVRGNALTKIQIVGVDAKNYINHCSYVPSLIPVP</sequence>
<accession>Q9FWW7</accession>
<organism>
    <name type="scientific">Arabidopsis thaliana</name>
    <name type="common">Mouse-ear cress</name>
    <dbReference type="NCBI Taxonomy" id="3702"/>
    <lineage>
        <taxon>Eukaryota</taxon>
        <taxon>Viridiplantae</taxon>
        <taxon>Streptophyta</taxon>
        <taxon>Embryophyta</taxon>
        <taxon>Tracheophyta</taxon>
        <taxon>Spermatophyta</taxon>
        <taxon>Magnoliopsida</taxon>
        <taxon>eudicotyledons</taxon>
        <taxon>Gunneridae</taxon>
        <taxon>Pentapetalae</taxon>
        <taxon>rosids</taxon>
        <taxon>malvids</taxon>
        <taxon>Brassicales</taxon>
        <taxon>Brassicaceae</taxon>
        <taxon>Camelineae</taxon>
        <taxon>Arabidopsis</taxon>
    </lineage>
</organism>
<protein>
    <recommendedName>
        <fullName>Putative F-box/kelch-repeat protein At1g12170</fullName>
    </recommendedName>
</protein>
<evidence type="ECO:0000255" key="1">
    <source>
        <dbReference type="PROSITE-ProRule" id="PRU00080"/>
    </source>
</evidence>
<evidence type="ECO:0000305" key="2"/>
<gene>
    <name type="ordered locus">At1g12170</name>
    <name type="ORF">T28K15.9</name>
</gene>